<sequence>MAVQKSRVTPSRRGQRRSHDALTAKKLSIDPTSGEVHIRHHVTADGYYRGKKVIAIKASVVEED</sequence>
<feature type="initiator methionine" description="Removed" evidence="1">
    <location>
        <position position="1"/>
    </location>
</feature>
<feature type="chain" id="PRO_0000172442" description="Large ribosomal subunit protein bL32">
    <location>
        <begin position="2"/>
        <end position="64"/>
    </location>
</feature>
<feature type="region of interest" description="Disordered" evidence="2">
    <location>
        <begin position="1"/>
        <end position="28"/>
    </location>
</feature>
<comment type="similarity">
    <text evidence="3">Belongs to the bacterial ribosomal protein bL32 family.</text>
</comment>
<evidence type="ECO:0000250" key="1"/>
<evidence type="ECO:0000256" key="2">
    <source>
        <dbReference type="SAM" id="MobiDB-lite"/>
    </source>
</evidence>
<evidence type="ECO:0000305" key="3"/>
<accession>Q9PCG5</accession>
<name>RL32_XYLFA</name>
<dbReference type="EMBL" id="AE003849">
    <property type="protein sequence ID" value="AAF84622.1"/>
    <property type="molecule type" value="Genomic_DNA"/>
</dbReference>
<dbReference type="PIR" id="G82633">
    <property type="entry name" value="G82633"/>
</dbReference>
<dbReference type="RefSeq" id="WP_010894283.1">
    <property type="nucleotide sequence ID" value="NC_002488.3"/>
</dbReference>
<dbReference type="SMR" id="Q9PCG5"/>
<dbReference type="STRING" id="160492.XF_1816"/>
<dbReference type="KEGG" id="xfa:XF_1816"/>
<dbReference type="eggNOG" id="COG0333">
    <property type="taxonomic scope" value="Bacteria"/>
</dbReference>
<dbReference type="HOGENOM" id="CLU_129084_2_1_6"/>
<dbReference type="Proteomes" id="UP000000812">
    <property type="component" value="Chromosome"/>
</dbReference>
<dbReference type="GO" id="GO:0015934">
    <property type="term" value="C:large ribosomal subunit"/>
    <property type="evidence" value="ECO:0007669"/>
    <property type="project" value="InterPro"/>
</dbReference>
<dbReference type="GO" id="GO:0003735">
    <property type="term" value="F:structural constituent of ribosome"/>
    <property type="evidence" value="ECO:0007669"/>
    <property type="project" value="InterPro"/>
</dbReference>
<dbReference type="GO" id="GO:0006412">
    <property type="term" value="P:translation"/>
    <property type="evidence" value="ECO:0007669"/>
    <property type="project" value="UniProtKB-UniRule"/>
</dbReference>
<dbReference type="HAMAP" id="MF_00340">
    <property type="entry name" value="Ribosomal_bL32"/>
    <property type="match status" value="1"/>
</dbReference>
<dbReference type="InterPro" id="IPR002677">
    <property type="entry name" value="Ribosomal_bL32"/>
</dbReference>
<dbReference type="InterPro" id="IPR044957">
    <property type="entry name" value="Ribosomal_bL32_bact"/>
</dbReference>
<dbReference type="InterPro" id="IPR011332">
    <property type="entry name" value="Ribosomal_zn-bd"/>
</dbReference>
<dbReference type="NCBIfam" id="TIGR01031">
    <property type="entry name" value="rpmF_bact"/>
    <property type="match status" value="1"/>
</dbReference>
<dbReference type="PANTHER" id="PTHR35534">
    <property type="entry name" value="50S RIBOSOMAL PROTEIN L32"/>
    <property type="match status" value="1"/>
</dbReference>
<dbReference type="PANTHER" id="PTHR35534:SF1">
    <property type="entry name" value="LARGE RIBOSOMAL SUBUNIT PROTEIN BL32"/>
    <property type="match status" value="1"/>
</dbReference>
<dbReference type="Pfam" id="PF01783">
    <property type="entry name" value="Ribosomal_L32p"/>
    <property type="match status" value="1"/>
</dbReference>
<dbReference type="SUPFAM" id="SSF57829">
    <property type="entry name" value="Zn-binding ribosomal proteins"/>
    <property type="match status" value="1"/>
</dbReference>
<reference key="1">
    <citation type="journal article" date="2000" name="Nature">
        <title>The genome sequence of the plant pathogen Xylella fastidiosa.</title>
        <authorList>
            <person name="Simpson A.J.G."/>
            <person name="Reinach F.C."/>
            <person name="Arruda P."/>
            <person name="Abreu F.A."/>
            <person name="Acencio M."/>
            <person name="Alvarenga R."/>
            <person name="Alves L.M.C."/>
            <person name="Araya J.E."/>
            <person name="Baia G.S."/>
            <person name="Baptista C.S."/>
            <person name="Barros M.H."/>
            <person name="Bonaccorsi E.D."/>
            <person name="Bordin S."/>
            <person name="Bove J.M."/>
            <person name="Briones M.R.S."/>
            <person name="Bueno M.R.P."/>
            <person name="Camargo A.A."/>
            <person name="Camargo L.E.A."/>
            <person name="Carraro D.M."/>
            <person name="Carrer H."/>
            <person name="Colauto N.B."/>
            <person name="Colombo C."/>
            <person name="Costa F.F."/>
            <person name="Costa M.C.R."/>
            <person name="Costa-Neto C.M."/>
            <person name="Coutinho L.L."/>
            <person name="Cristofani M."/>
            <person name="Dias-Neto E."/>
            <person name="Docena C."/>
            <person name="El-Dorry H."/>
            <person name="Facincani A.P."/>
            <person name="Ferreira A.J.S."/>
            <person name="Ferreira V.C.A."/>
            <person name="Ferro J.A."/>
            <person name="Fraga J.S."/>
            <person name="Franca S.C."/>
            <person name="Franco M.C."/>
            <person name="Frohme M."/>
            <person name="Furlan L.R."/>
            <person name="Garnier M."/>
            <person name="Goldman G.H."/>
            <person name="Goldman M.H.S."/>
            <person name="Gomes S.L."/>
            <person name="Gruber A."/>
            <person name="Ho P.L."/>
            <person name="Hoheisel J.D."/>
            <person name="Junqueira M.L."/>
            <person name="Kemper E.L."/>
            <person name="Kitajima J.P."/>
            <person name="Krieger J.E."/>
            <person name="Kuramae E.E."/>
            <person name="Laigret F."/>
            <person name="Lambais M.R."/>
            <person name="Leite L.C.C."/>
            <person name="Lemos E.G.M."/>
            <person name="Lemos M.V.F."/>
            <person name="Lopes S.A."/>
            <person name="Lopes C.R."/>
            <person name="Machado J.A."/>
            <person name="Machado M.A."/>
            <person name="Madeira A.M.B.N."/>
            <person name="Madeira H.M.F."/>
            <person name="Marino C.L."/>
            <person name="Marques M.V."/>
            <person name="Martins E.A.L."/>
            <person name="Martins E.M.F."/>
            <person name="Matsukuma A.Y."/>
            <person name="Menck C.F.M."/>
            <person name="Miracca E.C."/>
            <person name="Miyaki C.Y."/>
            <person name="Monteiro-Vitorello C.B."/>
            <person name="Moon D.H."/>
            <person name="Nagai M.A."/>
            <person name="Nascimento A.L.T.O."/>
            <person name="Netto L.E.S."/>
            <person name="Nhani A. Jr."/>
            <person name="Nobrega F.G."/>
            <person name="Nunes L.R."/>
            <person name="Oliveira M.A."/>
            <person name="de Oliveira M.C."/>
            <person name="de Oliveira R.C."/>
            <person name="Palmieri D.A."/>
            <person name="Paris A."/>
            <person name="Peixoto B.R."/>
            <person name="Pereira G.A.G."/>
            <person name="Pereira H.A. Jr."/>
            <person name="Pesquero J.B."/>
            <person name="Quaggio R.B."/>
            <person name="Roberto P.G."/>
            <person name="Rodrigues V."/>
            <person name="de Rosa A.J.M."/>
            <person name="de Rosa V.E. Jr."/>
            <person name="de Sa R.G."/>
            <person name="Santelli R.V."/>
            <person name="Sawasaki H.E."/>
            <person name="da Silva A.C.R."/>
            <person name="da Silva A.M."/>
            <person name="da Silva F.R."/>
            <person name="Silva W.A. Jr."/>
            <person name="da Silveira J.F."/>
            <person name="Silvestri M.L.Z."/>
            <person name="Siqueira W.J."/>
            <person name="de Souza A.A."/>
            <person name="de Souza A.P."/>
            <person name="Terenzi M.F."/>
            <person name="Truffi D."/>
            <person name="Tsai S.M."/>
            <person name="Tsuhako M.H."/>
            <person name="Vallada H."/>
            <person name="Van Sluys M.A."/>
            <person name="Verjovski-Almeida S."/>
            <person name="Vettore A.L."/>
            <person name="Zago M.A."/>
            <person name="Zatz M."/>
            <person name="Meidanis J."/>
            <person name="Setubal J.C."/>
        </authorList>
    </citation>
    <scope>NUCLEOTIDE SEQUENCE [LARGE SCALE GENOMIC DNA]</scope>
    <source>
        <strain>9a5c</strain>
    </source>
</reference>
<proteinExistence type="inferred from homology"/>
<protein>
    <recommendedName>
        <fullName evidence="3">Large ribosomal subunit protein bL32</fullName>
    </recommendedName>
    <alternativeName>
        <fullName>50S ribosomal protein L32</fullName>
    </alternativeName>
</protein>
<gene>
    <name type="primary">rpmF</name>
    <name type="ordered locus">XF_1816</name>
</gene>
<keyword id="KW-0687">Ribonucleoprotein</keyword>
<keyword id="KW-0689">Ribosomal protein</keyword>
<organism>
    <name type="scientific">Xylella fastidiosa (strain 9a5c)</name>
    <dbReference type="NCBI Taxonomy" id="160492"/>
    <lineage>
        <taxon>Bacteria</taxon>
        <taxon>Pseudomonadati</taxon>
        <taxon>Pseudomonadota</taxon>
        <taxon>Gammaproteobacteria</taxon>
        <taxon>Lysobacterales</taxon>
        <taxon>Lysobacteraceae</taxon>
        <taxon>Xylella</taxon>
    </lineage>
</organism>